<reference key="1">
    <citation type="journal article" date="1999" name="Nature">
        <title>Sequence and analysis of chromosome 2 of the plant Arabidopsis thaliana.</title>
        <authorList>
            <person name="Lin X."/>
            <person name="Kaul S."/>
            <person name="Rounsley S.D."/>
            <person name="Shea T.P."/>
            <person name="Benito M.-I."/>
            <person name="Town C.D."/>
            <person name="Fujii C.Y."/>
            <person name="Mason T.M."/>
            <person name="Bowman C.L."/>
            <person name="Barnstead M.E."/>
            <person name="Feldblyum T.V."/>
            <person name="Buell C.R."/>
            <person name="Ketchum K.A."/>
            <person name="Lee J.J."/>
            <person name="Ronning C.M."/>
            <person name="Koo H.L."/>
            <person name="Moffat K.S."/>
            <person name="Cronin L.A."/>
            <person name="Shen M."/>
            <person name="Pai G."/>
            <person name="Van Aken S."/>
            <person name="Umayam L."/>
            <person name="Tallon L.J."/>
            <person name="Gill J.E."/>
            <person name="Adams M.D."/>
            <person name="Carrera A.J."/>
            <person name="Creasy T.H."/>
            <person name="Goodman H.M."/>
            <person name="Somerville C.R."/>
            <person name="Copenhaver G.P."/>
            <person name="Preuss D."/>
            <person name="Nierman W.C."/>
            <person name="White O."/>
            <person name="Eisen J.A."/>
            <person name="Salzberg S.L."/>
            <person name="Fraser C.M."/>
            <person name="Venter J.C."/>
        </authorList>
    </citation>
    <scope>NUCLEOTIDE SEQUENCE [LARGE SCALE GENOMIC DNA]</scope>
    <source>
        <strain>cv. Columbia</strain>
    </source>
</reference>
<reference key="2">
    <citation type="journal article" date="2017" name="Plant J.">
        <title>Araport11: a complete reannotation of the Arabidopsis thaliana reference genome.</title>
        <authorList>
            <person name="Cheng C.Y."/>
            <person name="Krishnakumar V."/>
            <person name="Chan A.P."/>
            <person name="Thibaud-Nissen F."/>
            <person name="Schobel S."/>
            <person name="Town C.D."/>
        </authorList>
    </citation>
    <scope>GENOME REANNOTATION</scope>
    <source>
        <strain>cv. Columbia</strain>
    </source>
</reference>
<reference key="3">
    <citation type="journal article" date="2003" name="Science">
        <title>Empirical analysis of transcriptional activity in the Arabidopsis genome.</title>
        <authorList>
            <person name="Yamada K."/>
            <person name="Lim J."/>
            <person name="Dale J.M."/>
            <person name="Chen H."/>
            <person name="Shinn P."/>
            <person name="Palm C.J."/>
            <person name="Southwick A.M."/>
            <person name="Wu H.C."/>
            <person name="Kim C.J."/>
            <person name="Nguyen M."/>
            <person name="Pham P.K."/>
            <person name="Cheuk R.F."/>
            <person name="Karlin-Newmann G."/>
            <person name="Liu S.X."/>
            <person name="Lam B."/>
            <person name="Sakano H."/>
            <person name="Wu T."/>
            <person name="Yu G."/>
            <person name="Miranda M."/>
            <person name="Quach H.L."/>
            <person name="Tripp M."/>
            <person name="Chang C.H."/>
            <person name="Lee J.M."/>
            <person name="Toriumi M.J."/>
            <person name="Chan M.M."/>
            <person name="Tang C.C."/>
            <person name="Onodera C.S."/>
            <person name="Deng J.M."/>
            <person name="Akiyama K."/>
            <person name="Ansari Y."/>
            <person name="Arakawa T."/>
            <person name="Banh J."/>
            <person name="Banno F."/>
            <person name="Bowser L."/>
            <person name="Brooks S.Y."/>
            <person name="Carninci P."/>
            <person name="Chao Q."/>
            <person name="Choy N."/>
            <person name="Enju A."/>
            <person name="Goldsmith A.D."/>
            <person name="Gurjal M."/>
            <person name="Hansen N.F."/>
            <person name="Hayashizaki Y."/>
            <person name="Johnson-Hopson C."/>
            <person name="Hsuan V.W."/>
            <person name="Iida K."/>
            <person name="Karnes M."/>
            <person name="Khan S."/>
            <person name="Koesema E."/>
            <person name="Ishida J."/>
            <person name="Jiang P.X."/>
            <person name="Jones T."/>
            <person name="Kawai J."/>
            <person name="Kamiya A."/>
            <person name="Meyers C."/>
            <person name="Nakajima M."/>
            <person name="Narusaka M."/>
            <person name="Seki M."/>
            <person name="Sakurai T."/>
            <person name="Satou M."/>
            <person name="Tamse R."/>
            <person name="Vaysberg M."/>
            <person name="Wallender E.K."/>
            <person name="Wong C."/>
            <person name="Yamamura Y."/>
            <person name="Yuan S."/>
            <person name="Shinozaki K."/>
            <person name="Davis R.W."/>
            <person name="Theologis A."/>
            <person name="Ecker J.R."/>
        </authorList>
    </citation>
    <scope>NUCLEOTIDE SEQUENCE [LARGE SCALE MRNA]</scope>
    <source>
        <strain>cv. Columbia</strain>
    </source>
</reference>
<reference key="4">
    <citation type="submission" date="2002-03" db="EMBL/GenBank/DDBJ databases">
        <title>Full-length cDNA from Arabidopsis thaliana.</title>
        <authorList>
            <person name="Brover V.V."/>
            <person name="Troukhan M.E."/>
            <person name="Alexandrov N.A."/>
            <person name="Lu Y.-P."/>
            <person name="Flavell R.B."/>
            <person name="Feldmann K.A."/>
        </authorList>
    </citation>
    <scope>NUCLEOTIDE SEQUENCE [LARGE SCALE MRNA]</scope>
</reference>
<reference key="5">
    <citation type="journal article" date="2000" name="Science">
        <title>Orchestrated transcription of key pathways in Arabidopsis by the circadian clock.</title>
        <authorList>
            <person name="Harmer S.L."/>
            <person name="Hogenesch J.B."/>
            <person name="Straume M."/>
            <person name="Chang H.-S."/>
            <person name="Han B."/>
            <person name="Zhu T."/>
            <person name="Wang X."/>
            <person name="Kreps J.A."/>
            <person name="Kay S.A."/>
        </authorList>
    </citation>
    <scope>INDUCTION</scope>
</reference>
<reference key="6">
    <citation type="journal article" date="2003" name="Curr. Biol.">
        <title>The F box protein AFR is a positive regulator of phytochrome A-mediated light signaling.</title>
        <authorList>
            <person name="Harmon F.G."/>
            <person name="Kay S.A."/>
        </authorList>
    </citation>
    <scope>FUNCTION</scope>
    <scope>INDUCTION</scope>
    <scope>INTERACTION WITH SKP1A/ASK1</scope>
</reference>
<reference key="7">
    <citation type="journal article" date="2003" name="Plant J.">
        <title>Protein interaction analysis of SCF ubiquitin E3 ligase subunits from Arabidopsis.</title>
        <authorList>
            <person name="Risseeuw E.P."/>
            <person name="Daskalchuk T.E."/>
            <person name="Banks T.W."/>
            <person name="Liu E."/>
            <person name="Cotelesage J."/>
            <person name="Hellmann H."/>
            <person name="Estelle M."/>
            <person name="Somers D.E."/>
            <person name="Crosby W.L."/>
        </authorList>
    </citation>
    <scope>INTERACTION WITH SKP1A/ASK1</scope>
</reference>
<keyword id="KW-0880">Kelch repeat</keyword>
<keyword id="KW-0607">Phytochrome signaling pathway</keyword>
<keyword id="KW-1185">Reference proteome</keyword>
<keyword id="KW-0677">Repeat</keyword>
<keyword id="KW-0833">Ubl conjugation pathway</keyword>
<protein>
    <recommendedName>
        <fullName>F-box protein AFR</fullName>
    </recommendedName>
    <alternativeName>
        <fullName>Protein ATTENUATED FAR-RED RESPONSE</fullName>
    </alternativeName>
    <alternativeName>
        <fullName>SKP1-interacting partner 29</fullName>
    </alternativeName>
</protein>
<comment type="function">
    <text evidence="1 5">Component of SCF (ASK-cullin-F-box) E3 ubiquitin ligase complexes, which may mediate the ubiquitination and subsequent proteasomal degradation of target proteins (By similarity). Part of the phyA-mediated signaling transduction pathway leading to the regulation of gene expression and hypocotyls elongation in response to red and far-red light exposure.</text>
</comment>
<comment type="pathway">
    <text>Protein modification; protein ubiquitination.</text>
</comment>
<comment type="subunit">
    <text evidence="1 4 5">Part of a SCF (ASK-cullin-F-box) protein ligase complex (By similarity). Interacts with SKP1A.</text>
</comment>
<comment type="interaction">
    <interactant intactId="EBI-604438">
        <id>Q8LAW2</id>
    </interactant>
    <interactant intactId="EBI-532357">
        <id>Q39255</id>
        <label>SKP1A</label>
    </interactant>
    <organismsDiffer>false</organismsDiffer>
    <experiments>4</experiments>
</comment>
<comment type="induction">
    <text evidence="3 5">Rhythmic expression with highest levels at the end of the dark phase, just before the transition to light. Induction by far-red light requires phyA.</text>
</comment>
<comment type="domain">
    <text>The kelch repeats form a beta-propeller structure involved in protein-protein interaction.</text>
</comment>
<comment type="domain">
    <text>The F-box is required for the interaction with SKP1A.</text>
</comment>
<accession>Q8LAW2</accession>
<accession>Q9SJB1</accession>
<proteinExistence type="evidence at protein level"/>
<gene>
    <name type="primary">AFR</name>
    <name type="synonym">SKIP29</name>
    <name type="ordered locus">At2g24540</name>
    <name type="ORF">F25P17.16</name>
</gene>
<name>AFR_ARATH</name>
<feature type="chain" id="PRO_0000119959" description="F-box protein AFR">
    <location>
        <begin position="1"/>
        <end position="372"/>
    </location>
</feature>
<feature type="domain" description="F-box">
    <location>
        <begin position="29"/>
        <end position="74"/>
    </location>
</feature>
<feature type="repeat" description="Kelch 1">
    <location>
        <begin position="80"/>
        <end position="126"/>
    </location>
</feature>
<feature type="repeat" description="Kelch 2">
    <location>
        <begin position="135"/>
        <end position="178"/>
    </location>
</feature>
<feature type="repeat" description="Kelch 3">
    <location>
        <begin position="179"/>
        <end position="227"/>
    </location>
</feature>
<feature type="repeat" description="Kelch 4">
    <location>
        <begin position="229"/>
        <end position="276"/>
    </location>
</feature>
<feature type="repeat" description="Kelch 5">
    <location>
        <begin position="279"/>
        <end position="325"/>
    </location>
</feature>
<feature type="region of interest" description="Disordered" evidence="2">
    <location>
        <begin position="1"/>
        <end position="27"/>
    </location>
</feature>
<feature type="compositionally biased region" description="Polar residues" evidence="2">
    <location>
        <begin position="1"/>
        <end position="15"/>
    </location>
</feature>
<feature type="sequence conflict" description="In Ref. 4; AAM65112." evidence="6" ref="4">
    <original>M</original>
    <variation>I</variation>
    <location>
        <position position="130"/>
    </location>
</feature>
<feature type="sequence conflict" description="In Ref. 4; AAM65112." evidence="6" ref="4">
    <original>Q</original>
    <variation>E</variation>
    <location>
        <position position="246"/>
    </location>
</feature>
<feature type="sequence conflict" description="In Ref. 4; AAM65112." evidence="6" ref="4">
    <original>Q</original>
    <variation>P</variation>
    <location>
        <position position="307"/>
    </location>
</feature>
<feature type="sequence conflict" description="In Ref. 4; AAM65112." evidence="6" ref="4">
    <original>R</original>
    <variation>K</variation>
    <location>
        <position position="351"/>
    </location>
</feature>
<sequence length="372" mass="41278">MAEQETTSNINTINDQAEEETRTKSQPLISGLPNDIAELCLLRLPYPYHALYRSVSSSWNKTITNPRFLFSKQSLSISSPYLFVFAFNKSTARIQWQSLDLASGRWFVLPPMPNSFTKISSPHALSCASMPRQGKLFVLGGGDVNRSAVVYTALTNRWSCISPMMSPRTYFVSGNVNGKIMAVGGSVGGNGEATTEVESYDPDNDTWTVVKKLPMVLAKYDSAVIGKEMCVTEGWAWPFMFPPMGQVYDSDEGTWREMSGGMKEGWTGVSVVIRDRLFVISEHGDFPMKVYCSDDDTWRYVSGEKLQGEKMRRPFAVTGADDRVFVVASGINVAEGRVSEGQNGDFSVEWRMVSSPKSSIQFSPASCHVLYV</sequence>
<dbReference type="EMBL" id="AC006954">
    <property type="protein sequence ID" value="AAD23891.1"/>
    <property type="molecule type" value="Genomic_DNA"/>
</dbReference>
<dbReference type="EMBL" id="CP002685">
    <property type="protein sequence ID" value="AEC07590.1"/>
    <property type="molecule type" value="Genomic_DNA"/>
</dbReference>
<dbReference type="EMBL" id="AY072009">
    <property type="protein sequence ID" value="AAL57704.1"/>
    <property type="molecule type" value="mRNA"/>
</dbReference>
<dbReference type="EMBL" id="BT000847">
    <property type="protein sequence ID" value="AAN38684.1"/>
    <property type="molecule type" value="mRNA"/>
</dbReference>
<dbReference type="EMBL" id="AY087570">
    <property type="protein sequence ID" value="AAM65112.1"/>
    <property type="molecule type" value="mRNA"/>
</dbReference>
<dbReference type="PIR" id="H84637">
    <property type="entry name" value="H84637"/>
</dbReference>
<dbReference type="RefSeq" id="NP_565572.1">
    <property type="nucleotide sequence ID" value="NM_128015.2"/>
</dbReference>
<dbReference type="SMR" id="Q8LAW2"/>
<dbReference type="BioGRID" id="2342">
    <property type="interactions" value="6"/>
</dbReference>
<dbReference type="FunCoup" id="Q8LAW2">
    <property type="interactions" value="4"/>
</dbReference>
<dbReference type="IntAct" id="Q8LAW2">
    <property type="interactions" value="6"/>
</dbReference>
<dbReference type="STRING" id="3702.Q8LAW2"/>
<dbReference type="PaxDb" id="3702-AT2G24540.1"/>
<dbReference type="ProteomicsDB" id="244685"/>
<dbReference type="EnsemblPlants" id="AT2G24540.1">
    <property type="protein sequence ID" value="AT2G24540.1"/>
    <property type="gene ID" value="AT2G24540"/>
</dbReference>
<dbReference type="GeneID" id="816990"/>
<dbReference type="Gramene" id="AT2G24540.1">
    <property type="protein sequence ID" value="AT2G24540.1"/>
    <property type="gene ID" value="AT2G24540"/>
</dbReference>
<dbReference type="KEGG" id="ath:AT2G24540"/>
<dbReference type="Araport" id="AT2G24540"/>
<dbReference type="TAIR" id="AT2G24540">
    <property type="gene designation" value="AFR"/>
</dbReference>
<dbReference type="eggNOG" id="KOG1072">
    <property type="taxonomic scope" value="Eukaryota"/>
</dbReference>
<dbReference type="HOGENOM" id="CLU_044411_0_0_1"/>
<dbReference type="InParanoid" id="Q8LAW2"/>
<dbReference type="OMA" id="CLLHVPY"/>
<dbReference type="PhylomeDB" id="Q8LAW2"/>
<dbReference type="UniPathway" id="UPA00143"/>
<dbReference type="PRO" id="PR:Q8LAW2"/>
<dbReference type="Proteomes" id="UP000006548">
    <property type="component" value="Chromosome 2"/>
</dbReference>
<dbReference type="ExpressionAtlas" id="Q8LAW2">
    <property type="expression patterns" value="baseline and differential"/>
</dbReference>
<dbReference type="GO" id="GO:0016567">
    <property type="term" value="P:protein ubiquitination"/>
    <property type="evidence" value="ECO:0007669"/>
    <property type="project" value="UniProtKB-UniPathway"/>
</dbReference>
<dbReference type="GO" id="GO:0010017">
    <property type="term" value="P:red or far-red light signaling pathway"/>
    <property type="evidence" value="ECO:0000315"/>
    <property type="project" value="UniProtKB"/>
</dbReference>
<dbReference type="GO" id="GO:0009585">
    <property type="term" value="P:red, far-red light phototransduction"/>
    <property type="evidence" value="ECO:0000315"/>
    <property type="project" value="UniProtKB"/>
</dbReference>
<dbReference type="CDD" id="cd22152">
    <property type="entry name" value="F-box_AtAFR-like"/>
    <property type="match status" value="1"/>
</dbReference>
<dbReference type="FunFam" id="2.120.10.80:FF:000259">
    <property type="entry name" value="F-box protein AFR"/>
    <property type="match status" value="1"/>
</dbReference>
<dbReference type="Gene3D" id="2.120.10.80">
    <property type="entry name" value="Kelch-type beta propeller"/>
    <property type="match status" value="1"/>
</dbReference>
<dbReference type="InterPro" id="IPR036047">
    <property type="entry name" value="F-box-like_dom_sf"/>
</dbReference>
<dbReference type="InterPro" id="IPR001810">
    <property type="entry name" value="F-box_dom"/>
</dbReference>
<dbReference type="InterPro" id="IPR015915">
    <property type="entry name" value="Kelch-typ_b-propeller"/>
</dbReference>
<dbReference type="InterPro" id="IPR006652">
    <property type="entry name" value="Kelch_1"/>
</dbReference>
<dbReference type="PANTHER" id="PTHR46344">
    <property type="entry name" value="OS02G0202900 PROTEIN"/>
    <property type="match status" value="1"/>
</dbReference>
<dbReference type="PANTHER" id="PTHR46344:SF4">
    <property type="entry name" value="OS07G0153400 PROTEIN"/>
    <property type="match status" value="1"/>
</dbReference>
<dbReference type="Pfam" id="PF00646">
    <property type="entry name" value="F-box"/>
    <property type="match status" value="1"/>
</dbReference>
<dbReference type="Pfam" id="PF01344">
    <property type="entry name" value="Kelch_1"/>
    <property type="match status" value="1"/>
</dbReference>
<dbReference type="SMART" id="SM00256">
    <property type="entry name" value="FBOX"/>
    <property type="match status" value="1"/>
</dbReference>
<dbReference type="SMART" id="SM00612">
    <property type="entry name" value="Kelch"/>
    <property type="match status" value="2"/>
</dbReference>
<dbReference type="SUPFAM" id="SSF81383">
    <property type="entry name" value="F-box domain"/>
    <property type="match status" value="1"/>
</dbReference>
<dbReference type="SUPFAM" id="SSF117281">
    <property type="entry name" value="Kelch motif"/>
    <property type="match status" value="1"/>
</dbReference>
<organism>
    <name type="scientific">Arabidopsis thaliana</name>
    <name type="common">Mouse-ear cress</name>
    <dbReference type="NCBI Taxonomy" id="3702"/>
    <lineage>
        <taxon>Eukaryota</taxon>
        <taxon>Viridiplantae</taxon>
        <taxon>Streptophyta</taxon>
        <taxon>Embryophyta</taxon>
        <taxon>Tracheophyta</taxon>
        <taxon>Spermatophyta</taxon>
        <taxon>Magnoliopsida</taxon>
        <taxon>eudicotyledons</taxon>
        <taxon>Gunneridae</taxon>
        <taxon>Pentapetalae</taxon>
        <taxon>rosids</taxon>
        <taxon>malvids</taxon>
        <taxon>Brassicales</taxon>
        <taxon>Brassicaceae</taxon>
        <taxon>Camelineae</taxon>
        <taxon>Arabidopsis</taxon>
    </lineage>
</organism>
<evidence type="ECO:0000250" key="1"/>
<evidence type="ECO:0000256" key="2">
    <source>
        <dbReference type="SAM" id="MobiDB-lite"/>
    </source>
</evidence>
<evidence type="ECO:0000269" key="3">
    <source>
    </source>
</evidence>
<evidence type="ECO:0000269" key="4">
    <source>
    </source>
</evidence>
<evidence type="ECO:0000269" key="5">
    <source>
    </source>
</evidence>
<evidence type="ECO:0000305" key="6"/>